<comment type="function">
    <text evidence="1">Could be a nuclease involved in processing of the 5'-end of pre-16S rRNA.</text>
</comment>
<comment type="subcellular location">
    <subcellularLocation>
        <location evidence="1">Cytoplasm</location>
    </subcellularLocation>
</comment>
<comment type="similarity">
    <text evidence="1">Belongs to the YqgF nuclease family.</text>
</comment>
<keyword id="KW-0963">Cytoplasm</keyword>
<keyword id="KW-0378">Hydrolase</keyword>
<keyword id="KW-0540">Nuclease</keyword>
<keyword id="KW-1185">Reference proteome</keyword>
<keyword id="KW-0690">Ribosome biogenesis</keyword>
<dbReference type="EC" id="3.1.-.-" evidence="1"/>
<dbReference type="EMBL" id="CP000509">
    <property type="protein sequence ID" value="ABL81913.1"/>
    <property type="molecule type" value="Genomic_DNA"/>
</dbReference>
<dbReference type="SMR" id="A1SJC8"/>
<dbReference type="STRING" id="196162.Noca_2408"/>
<dbReference type="KEGG" id="nca:Noca_2408"/>
<dbReference type="eggNOG" id="COG0816">
    <property type="taxonomic scope" value="Bacteria"/>
</dbReference>
<dbReference type="HOGENOM" id="CLU_098240_0_0_11"/>
<dbReference type="OrthoDB" id="9790539at2"/>
<dbReference type="Proteomes" id="UP000000640">
    <property type="component" value="Chromosome"/>
</dbReference>
<dbReference type="GO" id="GO:0005829">
    <property type="term" value="C:cytosol"/>
    <property type="evidence" value="ECO:0007669"/>
    <property type="project" value="TreeGrafter"/>
</dbReference>
<dbReference type="GO" id="GO:0004518">
    <property type="term" value="F:nuclease activity"/>
    <property type="evidence" value="ECO:0007669"/>
    <property type="project" value="UniProtKB-KW"/>
</dbReference>
<dbReference type="GO" id="GO:0000967">
    <property type="term" value="P:rRNA 5'-end processing"/>
    <property type="evidence" value="ECO:0007669"/>
    <property type="project" value="UniProtKB-UniRule"/>
</dbReference>
<dbReference type="CDD" id="cd16964">
    <property type="entry name" value="YqgF"/>
    <property type="match status" value="1"/>
</dbReference>
<dbReference type="Gene3D" id="3.30.420.140">
    <property type="entry name" value="YqgF/RNase H-like domain"/>
    <property type="match status" value="1"/>
</dbReference>
<dbReference type="HAMAP" id="MF_00651">
    <property type="entry name" value="Nuclease_YqgF"/>
    <property type="match status" value="1"/>
</dbReference>
<dbReference type="InterPro" id="IPR012337">
    <property type="entry name" value="RNaseH-like_sf"/>
</dbReference>
<dbReference type="InterPro" id="IPR005227">
    <property type="entry name" value="YqgF"/>
</dbReference>
<dbReference type="InterPro" id="IPR006641">
    <property type="entry name" value="YqgF/RNaseH-like_dom"/>
</dbReference>
<dbReference type="InterPro" id="IPR037027">
    <property type="entry name" value="YqgF/RNaseH-like_dom_sf"/>
</dbReference>
<dbReference type="NCBIfam" id="TIGR00250">
    <property type="entry name" value="RNAse_H_YqgF"/>
    <property type="match status" value="1"/>
</dbReference>
<dbReference type="PANTHER" id="PTHR33317">
    <property type="entry name" value="POLYNUCLEOTIDYL TRANSFERASE, RIBONUCLEASE H-LIKE SUPERFAMILY PROTEIN"/>
    <property type="match status" value="1"/>
</dbReference>
<dbReference type="PANTHER" id="PTHR33317:SF4">
    <property type="entry name" value="POLYNUCLEOTIDYL TRANSFERASE, RIBONUCLEASE H-LIKE SUPERFAMILY PROTEIN"/>
    <property type="match status" value="1"/>
</dbReference>
<dbReference type="Pfam" id="PF03652">
    <property type="entry name" value="RuvX"/>
    <property type="match status" value="1"/>
</dbReference>
<dbReference type="SMART" id="SM00732">
    <property type="entry name" value="YqgFc"/>
    <property type="match status" value="1"/>
</dbReference>
<dbReference type="SUPFAM" id="SSF53098">
    <property type="entry name" value="Ribonuclease H-like"/>
    <property type="match status" value="1"/>
</dbReference>
<protein>
    <recommendedName>
        <fullName evidence="1">Putative pre-16S rRNA nuclease</fullName>
        <ecNumber evidence="1">3.1.-.-</ecNumber>
    </recommendedName>
</protein>
<proteinExistence type="inferred from homology"/>
<gene>
    <name type="ordered locus">Noca_2408</name>
</gene>
<sequence>MRAGVRIGIDPGDARIGVARSDPSGFLATPVETVRRGKGDLARIGRILAAEEDEGATVLEVVVGLPRSLSGREGPAAAKVREFAGRLAARVAPVPVRLVDERMTTVSAEAMLRDQGRTGGKRRAVVDQAAAVLILQHALDTERATGAAPGEIVEET</sequence>
<accession>A1SJC8</accession>
<name>YQGF_NOCSJ</name>
<feature type="chain" id="PRO_1000061544" description="Putative pre-16S rRNA nuclease">
    <location>
        <begin position="1"/>
        <end position="156"/>
    </location>
</feature>
<organism>
    <name type="scientific">Nocardioides sp. (strain ATCC BAA-499 / JS614)</name>
    <dbReference type="NCBI Taxonomy" id="196162"/>
    <lineage>
        <taxon>Bacteria</taxon>
        <taxon>Bacillati</taxon>
        <taxon>Actinomycetota</taxon>
        <taxon>Actinomycetes</taxon>
        <taxon>Propionibacteriales</taxon>
        <taxon>Nocardioidaceae</taxon>
        <taxon>Nocardioides</taxon>
    </lineage>
</organism>
<reference key="1">
    <citation type="submission" date="2006-12" db="EMBL/GenBank/DDBJ databases">
        <title>Complete sequence of chromosome 1 of Nocardioides sp. JS614.</title>
        <authorList>
            <person name="Copeland A."/>
            <person name="Lucas S."/>
            <person name="Lapidus A."/>
            <person name="Barry K."/>
            <person name="Detter J.C."/>
            <person name="Glavina del Rio T."/>
            <person name="Hammon N."/>
            <person name="Israni S."/>
            <person name="Dalin E."/>
            <person name="Tice H."/>
            <person name="Pitluck S."/>
            <person name="Thompson L.S."/>
            <person name="Brettin T."/>
            <person name="Bruce D."/>
            <person name="Han C."/>
            <person name="Tapia R."/>
            <person name="Schmutz J."/>
            <person name="Larimer F."/>
            <person name="Land M."/>
            <person name="Hauser L."/>
            <person name="Kyrpides N."/>
            <person name="Kim E."/>
            <person name="Mattes T."/>
            <person name="Gossett J."/>
            <person name="Richardson P."/>
        </authorList>
    </citation>
    <scope>NUCLEOTIDE SEQUENCE [LARGE SCALE GENOMIC DNA]</scope>
    <source>
        <strain>ATCC BAA-499 / JS614</strain>
    </source>
</reference>
<evidence type="ECO:0000255" key="1">
    <source>
        <dbReference type="HAMAP-Rule" id="MF_00651"/>
    </source>
</evidence>